<keyword id="KW-0914">Notch signaling pathway</keyword>
<keyword id="KW-0539">Nucleus</keyword>
<keyword id="KW-1185">Reference proteome</keyword>
<keyword id="KW-0677">Repeat</keyword>
<keyword id="KW-0853">WD repeat</keyword>
<reference evidence="6 7" key="1">
    <citation type="journal article" date="1998" name="EMBO J.">
        <title>Notchless encodes a novel WD40-repeat-containing protein that modulates Notch signaling activity.</title>
        <authorList>
            <person name="Royet J."/>
            <person name="Bouwmeester T."/>
            <person name="Cohen S.M."/>
        </authorList>
    </citation>
    <scope>NUCLEOTIDE SEQUENCE [MRNA]</scope>
    <scope>FUNCTION</scope>
    <scope>DEVELOPMENTAL STAGE</scope>
</reference>
<reference evidence="8" key="2">
    <citation type="submission" date="2003-01" db="EMBL/GenBank/DDBJ databases">
        <authorList>
            <consortium name="NIH - Xenopus Gene Collection (XGC) project"/>
        </authorList>
    </citation>
    <scope>NUCLEOTIDE SEQUENCE [LARGE SCALE MRNA]</scope>
    <source>
        <tissue evidence="8">Embryo</tissue>
    </source>
</reference>
<gene>
    <name evidence="9" type="primary">nle1</name>
    <name evidence="7" type="synonym">nle</name>
</gene>
<name>NLE1_XENLA</name>
<dbReference type="EMBL" id="AF069737">
    <property type="protein sequence ID" value="AAC62236.1"/>
    <property type="molecule type" value="mRNA"/>
</dbReference>
<dbReference type="EMBL" id="BC044710">
    <property type="protein sequence ID" value="AAH44710.1"/>
    <property type="molecule type" value="mRNA"/>
</dbReference>
<dbReference type="RefSeq" id="NP_001080675.1">
    <property type="nucleotide sequence ID" value="NM_001087206.1"/>
</dbReference>
<dbReference type="SMR" id="Q7ZXK9"/>
<dbReference type="DNASU" id="380367"/>
<dbReference type="GeneID" id="380367"/>
<dbReference type="KEGG" id="xla:380367"/>
<dbReference type="AGR" id="Xenbase:XB-GENE-984064"/>
<dbReference type="CTD" id="380367"/>
<dbReference type="Xenbase" id="XB-GENE-984064">
    <property type="gene designation" value="nle1.S"/>
</dbReference>
<dbReference type="OrthoDB" id="10267436at2759"/>
<dbReference type="Proteomes" id="UP000186698">
    <property type="component" value="Chromosome 2S"/>
</dbReference>
<dbReference type="Bgee" id="380367">
    <property type="expression patterns" value="Expressed in testis and 19 other cell types or tissues"/>
</dbReference>
<dbReference type="GO" id="GO:0005730">
    <property type="term" value="C:nucleolus"/>
    <property type="evidence" value="ECO:0000318"/>
    <property type="project" value="GO_Central"/>
</dbReference>
<dbReference type="GO" id="GO:0007219">
    <property type="term" value="P:Notch signaling pathway"/>
    <property type="evidence" value="ECO:0007669"/>
    <property type="project" value="UniProtKB-KW"/>
</dbReference>
<dbReference type="GO" id="GO:0008593">
    <property type="term" value="P:regulation of Notch signaling pathway"/>
    <property type="evidence" value="ECO:0000318"/>
    <property type="project" value="GO_Central"/>
</dbReference>
<dbReference type="GO" id="GO:0000027">
    <property type="term" value="P:ribosomal large subunit assembly"/>
    <property type="evidence" value="ECO:0007669"/>
    <property type="project" value="TreeGrafter"/>
</dbReference>
<dbReference type="CDD" id="cd00200">
    <property type="entry name" value="WD40"/>
    <property type="match status" value="1"/>
</dbReference>
<dbReference type="FunFam" id="2.130.10.10:FF:000129">
    <property type="entry name" value="Notchless homolog 1 (Drosophila)"/>
    <property type="match status" value="1"/>
</dbReference>
<dbReference type="Gene3D" id="2.130.10.10">
    <property type="entry name" value="YVTN repeat-like/Quinoprotein amine dehydrogenase"/>
    <property type="match status" value="1"/>
</dbReference>
<dbReference type="InterPro" id="IPR020472">
    <property type="entry name" value="G-protein_beta_WD-40_rep"/>
</dbReference>
<dbReference type="InterPro" id="IPR001632">
    <property type="entry name" value="Gprotein_B"/>
</dbReference>
<dbReference type="InterPro" id="IPR012972">
    <property type="entry name" value="NLE"/>
</dbReference>
<dbReference type="InterPro" id="IPR011047">
    <property type="entry name" value="Quinoprotein_ADH-like_sf"/>
</dbReference>
<dbReference type="InterPro" id="IPR015943">
    <property type="entry name" value="WD40/YVTN_repeat-like_dom_sf"/>
</dbReference>
<dbReference type="InterPro" id="IPR019775">
    <property type="entry name" value="WD40_repeat_CS"/>
</dbReference>
<dbReference type="InterPro" id="IPR001680">
    <property type="entry name" value="WD40_rpt"/>
</dbReference>
<dbReference type="PANTHER" id="PTHR19848:SF0">
    <property type="entry name" value="NOTCHLESS PROTEIN HOMOLOG 1"/>
    <property type="match status" value="1"/>
</dbReference>
<dbReference type="PANTHER" id="PTHR19848">
    <property type="entry name" value="WD40 REPEAT PROTEIN"/>
    <property type="match status" value="1"/>
</dbReference>
<dbReference type="Pfam" id="PF08154">
    <property type="entry name" value="NLE"/>
    <property type="match status" value="1"/>
</dbReference>
<dbReference type="Pfam" id="PF00400">
    <property type="entry name" value="WD40"/>
    <property type="match status" value="7"/>
</dbReference>
<dbReference type="PRINTS" id="PR00319">
    <property type="entry name" value="GPROTEINB"/>
</dbReference>
<dbReference type="PRINTS" id="PR00320">
    <property type="entry name" value="GPROTEINBRPT"/>
</dbReference>
<dbReference type="SMART" id="SM00320">
    <property type="entry name" value="WD40"/>
    <property type="match status" value="8"/>
</dbReference>
<dbReference type="SUPFAM" id="SSF50998">
    <property type="entry name" value="Quinoprotein alcohol dehydrogenase-like"/>
    <property type="match status" value="1"/>
</dbReference>
<dbReference type="PROSITE" id="PS00678">
    <property type="entry name" value="WD_REPEATS_1"/>
    <property type="match status" value="4"/>
</dbReference>
<dbReference type="PROSITE" id="PS50082">
    <property type="entry name" value="WD_REPEATS_2"/>
    <property type="match status" value="7"/>
</dbReference>
<dbReference type="PROSITE" id="PS50294">
    <property type="entry name" value="WD_REPEATS_REGION"/>
    <property type="match status" value="1"/>
</dbReference>
<protein>
    <recommendedName>
        <fullName evidence="3">Notchless protein homolog 1</fullName>
    </recommendedName>
</protein>
<comment type="function">
    <text evidence="1 5">Plays a role in regulating the expression of CDKN1A and several members of the Wnt pathway, probably via its effects on Notch activity. Required for normal embryogenesis (By similarity). Plays a role in regulating Notch activity.</text>
</comment>
<comment type="subunit">
    <text evidence="2 3">Associates with the pre-60S ribosomal particle. Interacts (via WD repeats) with uL18 (By similarity). Interacts (via UBL domain) with MDN1 (via VWFA/MIDAS domain) (By similarity).</text>
</comment>
<comment type="subcellular location">
    <subcellularLocation>
        <location evidence="3">Nucleus</location>
        <location evidence="3">Nucleolus</location>
    </subcellularLocation>
</comment>
<comment type="developmental stage">
    <text evidence="5">Maternally transcribed, with constant expression during early stages of embryogenesis. Levels increase at the end of gastrulation and are maintained during neurulation and organogenesis. During later stages expressed in somites, segmental plate, brain, branchial arches, eyes and ventral bood islands.</text>
</comment>
<comment type="similarity">
    <text evidence="4">Belongs to the NLE1/RSA4 family.</text>
</comment>
<proteinExistence type="evidence at transcript level"/>
<organism>
    <name type="scientific">Xenopus laevis</name>
    <name type="common">African clawed frog</name>
    <dbReference type="NCBI Taxonomy" id="8355"/>
    <lineage>
        <taxon>Eukaryota</taxon>
        <taxon>Metazoa</taxon>
        <taxon>Chordata</taxon>
        <taxon>Craniata</taxon>
        <taxon>Vertebrata</taxon>
        <taxon>Euteleostomi</taxon>
        <taxon>Amphibia</taxon>
        <taxon>Batrachia</taxon>
        <taxon>Anura</taxon>
        <taxon>Pipoidea</taxon>
        <taxon>Pipidae</taxon>
        <taxon>Xenopodinae</taxon>
        <taxon>Xenopus</taxon>
        <taxon>Xenopus</taxon>
    </lineage>
</organism>
<evidence type="ECO:0000250" key="1"/>
<evidence type="ECO:0000250" key="2">
    <source>
        <dbReference type="UniProtKB" id="P25382"/>
    </source>
</evidence>
<evidence type="ECO:0000250" key="3">
    <source>
        <dbReference type="UniProtKB" id="Q9NVX2"/>
    </source>
</evidence>
<evidence type="ECO:0000255" key="4"/>
<evidence type="ECO:0000269" key="5">
    <source>
    </source>
</evidence>
<evidence type="ECO:0000305" key="6"/>
<evidence type="ECO:0000312" key="7">
    <source>
        <dbReference type="EMBL" id="AAC62236.1"/>
    </source>
</evidence>
<evidence type="ECO:0000312" key="8">
    <source>
        <dbReference type="EMBL" id="AAH44710.1"/>
    </source>
</evidence>
<evidence type="ECO:0000312" key="9">
    <source>
        <dbReference type="Xenbase" id="XB-GENE-984064"/>
    </source>
</evidence>
<sequence length="476" mass="52851">MKEDVGRLLIQFKNENGEGLGTPFDVPVDITPDKLQLVCNALLQEEDPVPLAFFVQDLEIVTSLDKTLEKQSVETEKVIDIIYQPQAVFKVRAVTRCTSSLEGHTEAVISVAFSPTGKYLASGSGDTTVRFWDLSTETPHFTSKGHTHWVLSIAWSPDGKKLASGCKNSQIFIWDPSTGKQIGKPLTGHSKWITWLCWEPLHLNPESRYLASASKDCTIRIWDTVMGQCQKILTSHTQSVTAVKWGGDGLLYSSSQDRTIKAWRAQDGVLCRTLQGHAHWVNTMALSTDYVLRTGAFNPADASVNPQDMSGSLEVLKEKALKRYNEVRGQGPERLVSGSDDFTLFLWAPAEEKKPLQRMTGHQALINEVLFSPDTRIIASASFDKSIKLWDGKTGKFLTSLRGHVSAVYQIAWSADSRLLVSGSSDSTLKVWDSKTKKLLIDLPGHADEVYSVDWSPDGQRVASGGKDKCLRIWRK</sequence>
<accession>Q7ZXK9</accession>
<accession>O93531</accession>
<feature type="chain" id="PRO_0000424663" description="Notchless protein homolog 1">
    <location>
        <begin position="1"/>
        <end position="476"/>
    </location>
</feature>
<feature type="repeat" description="WD 1" evidence="4">
    <location>
        <begin position="103"/>
        <end position="142"/>
    </location>
</feature>
<feature type="repeat" description="WD 2" evidence="4">
    <location>
        <begin position="145"/>
        <end position="184"/>
    </location>
</feature>
<feature type="repeat" description="WD 3" evidence="4">
    <location>
        <begin position="189"/>
        <end position="234"/>
    </location>
</feature>
<feature type="repeat" description="WD 4" evidence="4">
    <location>
        <begin position="236"/>
        <end position="273"/>
    </location>
</feature>
<feature type="repeat" description="WD 5" evidence="4">
    <location>
        <begin position="311"/>
        <end position="357"/>
    </location>
</feature>
<feature type="repeat" description="WD 6" evidence="4">
    <location>
        <begin position="361"/>
        <end position="400"/>
    </location>
</feature>
<feature type="repeat" description="WD 7" evidence="4">
    <location>
        <begin position="403"/>
        <end position="442"/>
    </location>
</feature>
<feature type="repeat" description="WD 8" evidence="4">
    <location>
        <begin position="445"/>
        <end position="476"/>
    </location>
</feature>
<feature type="region of interest" description="Ubiquitin-like (UBL) domain" evidence="2">
    <location>
        <begin position="5"/>
        <end position="87"/>
    </location>
</feature>
<feature type="sequence conflict" description="In Ref. 1; AAC62236." evidence="6" ref="1">
    <original>V</original>
    <variation>L</variation>
    <location>
        <position position="28"/>
    </location>
</feature>